<reference key="1">
    <citation type="journal article" date="2005" name="Nucleic Acids Res.">
        <title>Genome dynamics and diversity of Shigella species, the etiologic agents of bacillary dysentery.</title>
        <authorList>
            <person name="Yang F."/>
            <person name="Yang J."/>
            <person name="Zhang X."/>
            <person name="Chen L."/>
            <person name="Jiang Y."/>
            <person name="Yan Y."/>
            <person name="Tang X."/>
            <person name="Wang J."/>
            <person name="Xiong Z."/>
            <person name="Dong J."/>
            <person name="Xue Y."/>
            <person name="Zhu Y."/>
            <person name="Xu X."/>
            <person name="Sun L."/>
            <person name="Chen S."/>
            <person name="Nie H."/>
            <person name="Peng J."/>
            <person name="Xu J."/>
            <person name="Wang Y."/>
            <person name="Yuan Z."/>
            <person name="Wen Y."/>
            <person name="Yao Z."/>
            <person name="Shen Y."/>
            <person name="Qiang B."/>
            <person name="Hou Y."/>
            <person name="Yu J."/>
            <person name="Jin Q."/>
        </authorList>
    </citation>
    <scope>NUCLEOTIDE SEQUENCE [LARGE SCALE GENOMIC DNA]</scope>
    <source>
        <strain>Sd197</strain>
    </source>
</reference>
<evidence type="ECO:0000255" key="1">
    <source>
        <dbReference type="HAMAP-Rule" id="MF_01372"/>
    </source>
</evidence>
<evidence type="ECO:0000305" key="2"/>
<proteinExistence type="inferred from homology"/>
<keyword id="KW-1185">Reference proteome</keyword>
<keyword id="KW-0732">Signal</keyword>
<feature type="signal peptide" evidence="1">
    <location>
        <begin position="1"/>
        <end position="23"/>
    </location>
</feature>
<feature type="chain" id="PRO_0000278590" description="UPF0412 protein YaaI">
    <location>
        <begin position="24"/>
        <end position="134"/>
    </location>
</feature>
<sequence>MKSVFTISASLAISLMLCCTAQANDHKLLGVIAMPRNETNDLALKLPVCRIVKRIQLSADHGDLQLSGASVYFKAARSASQSLNIPSEIKEGQTTDWININSDNDNKRCVSKITFSGHTVNSSDMATLKIIGDD</sequence>
<accession>Q32KA6</accession>
<organism>
    <name type="scientific">Shigella dysenteriae serotype 1 (strain Sd197)</name>
    <dbReference type="NCBI Taxonomy" id="300267"/>
    <lineage>
        <taxon>Bacteria</taxon>
        <taxon>Pseudomonadati</taxon>
        <taxon>Pseudomonadota</taxon>
        <taxon>Gammaproteobacteria</taxon>
        <taxon>Enterobacterales</taxon>
        <taxon>Enterobacteriaceae</taxon>
        <taxon>Shigella</taxon>
    </lineage>
</organism>
<name>YAAI_SHIDS</name>
<comment type="similarity">
    <text evidence="1">Belongs to the UPF0412 family.</text>
</comment>
<comment type="sequence caution" evidence="2">
    <conflict type="erroneous initiation">
        <sequence resource="EMBL-CDS" id="ABB60252"/>
    </conflict>
</comment>
<protein>
    <recommendedName>
        <fullName evidence="1">UPF0412 protein YaaI</fullName>
    </recommendedName>
</protein>
<dbReference type="EMBL" id="CP000034">
    <property type="protein sequence ID" value="ABB60252.1"/>
    <property type="status" value="ALT_INIT"/>
    <property type="molecule type" value="Genomic_DNA"/>
</dbReference>
<dbReference type="RefSeq" id="WP_000843568.1">
    <property type="nucleotide sequence ID" value="NC_007606.1"/>
</dbReference>
<dbReference type="RefSeq" id="YP_401740.1">
    <property type="nucleotide sequence ID" value="NC_007606.1"/>
</dbReference>
<dbReference type="STRING" id="300267.SDY_0012"/>
<dbReference type="EnsemblBacteria" id="ABB60252">
    <property type="protein sequence ID" value="ABB60252"/>
    <property type="gene ID" value="SDY_0012"/>
</dbReference>
<dbReference type="KEGG" id="sdy:SDY_0012"/>
<dbReference type="PATRIC" id="fig|300267.13.peg.12"/>
<dbReference type="HOGENOM" id="CLU_158661_0_0_6"/>
<dbReference type="Proteomes" id="UP000002716">
    <property type="component" value="Chromosome"/>
</dbReference>
<dbReference type="HAMAP" id="MF_01372">
    <property type="entry name" value="UPF0412"/>
    <property type="match status" value="1"/>
</dbReference>
<dbReference type="InterPro" id="IPR020240">
    <property type="entry name" value="UPF0412_YaaI"/>
</dbReference>
<dbReference type="NCBIfam" id="NF007541">
    <property type="entry name" value="PRK10154.1"/>
    <property type="match status" value="1"/>
</dbReference>
<dbReference type="Pfam" id="PF10807">
    <property type="entry name" value="DUF2541"/>
    <property type="match status" value="1"/>
</dbReference>
<gene>
    <name evidence="1" type="primary">yaaI</name>
    <name type="ordered locus">SDY_0012</name>
</gene>